<reference key="1">
    <citation type="journal article" date="2002" name="J. Mol. Microbiol. Biotechnol.">
        <title>The genome of Methanosarcina mazei: evidence for lateral gene transfer between Bacteria and Archaea.</title>
        <authorList>
            <person name="Deppenmeier U."/>
            <person name="Johann A."/>
            <person name="Hartsch T."/>
            <person name="Merkl R."/>
            <person name="Schmitz R.A."/>
            <person name="Martinez-Arias R."/>
            <person name="Henne A."/>
            <person name="Wiezer A."/>
            <person name="Baeumer S."/>
            <person name="Jacobi C."/>
            <person name="Brueggemann H."/>
            <person name="Lienard T."/>
            <person name="Christmann A."/>
            <person name="Boemecke M."/>
            <person name="Steckel S."/>
            <person name="Bhattacharyya A."/>
            <person name="Lykidis A."/>
            <person name="Overbeek R."/>
            <person name="Klenk H.-P."/>
            <person name="Gunsalus R.P."/>
            <person name="Fritz H.-J."/>
            <person name="Gottschalk G."/>
        </authorList>
    </citation>
    <scope>NUCLEOTIDE SEQUENCE [LARGE SCALE GENOMIC DNA]</scope>
    <source>
        <strain>ATCC BAA-159 / DSM 3647 / Goe1 / Go1 / JCM 11833 / OCM 88</strain>
    </source>
</reference>
<protein>
    <recommendedName>
        <fullName evidence="1">5-amino-6-(D-ribitylamino)uracil--L-tyrosine 4-hydroxyphenyl transferase 1</fullName>
        <ecNumber evidence="1">2.5.1.147</ecNumber>
    </recommendedName>
    <alternativeName>
        <fullName evidence="1">FO synthase subunit 2 1</fullName>
    </alternativeName>
</protein>
<name>COFH1_METMA</name>
<keyword id="KW-0004">4Fe-4S</keyword>
<keyword id="KW-0408">Iron</keyword>
<keyword id="KW-0411">Iron-sulfur</keyword>
<keyword id="KW-0479">Metal-binding</keyword>
<keyword id="KW-0949">S-adenosyl-L-methionine</keyword>
<keyword id="KW-0808">Transferase</keyword>
<comment type="function">
    <text evidence="1">Catalyzes the radical-mediated synthesis of 5-amino-5-(4-hydroxybenzyl)-6-(D-ribitylimino)-5,6-dihydrouracil from 5-amino-6-(D-ribitylamino)uracil and L-tyrosine.</text>
</comment>
<comment type="catalytic activity">
    <reaction evidence="1">
        <text>5-amino-6-(D-ribitylamino)uracil + L-tyrosine + S-adenosyl-L-methionine = 5-amino-5-(4-hydroxybenzyl)-6-(D-ribitylimino)-5,6-dihydrouracil + 2-iminoacetate + 5'-deoxyadenosine + L-methionine + H(+)</text>
        <dbReference type="Rhea" id="RHEA:55200"/>
        <dbReference type="ChEBI" id="CHEBI:15378"/>
        <dbReference type="ChEBI" id="CHEBI:15934"/>
        <dbReference type="ChEBI" id="CHEBI:17319"/>
        <dbReference type="ChEBI" id="CHEBI:57844"/>
        <dbReference type="ChEBI" id="CHEBI:58315"/>
        <dbReference type="ChEBI" id="CHEBI:59789"/>
        <dbReference type="ChEBI" id="CHEBI:77846"/>
        <dbReference type="ChEBI" id="CHEBI:85936"/>
        <dbReference type="EC" id="2.5.1.147"/>
    </reaction>
</comment>
<comment type="cofactor">
    <cofactor evidence="1">
        <name>[4Fe-4S] cluster</name>
        <dbReference type="ChEBI" id="CHEBI:49883"/>
    </cofactor>
    <text evidence="1">Binds 1 [4Fe-4S] cluster. The cluster is coordinated with 3 cysteines and an exchangeable S-adenosyl-L-methionine.</text>
</comment>
<comment type="pathway">
    <text evidence="1">Cofactor biosynthesis; coenzyme F0 biosynthesis.</text>
</comment>
<comment type="subunit">
    <text evidence="1">Consists of two subunits, CofG and CofH.</text>
</comment>
<comment type="similarity">
    <text evidence="1">Belongs to the radical SAM superfamily. CofH family.</text>
</comment>
<organism>
    <name type="scientific">Methanosarcina mazei (strain ATCC BAA-159 / DSM 3647 / Goe1 / Go1 / JCM 11833 / OCM 88)</name>
    <name type="common">Methanosarcina frisia</name>
    <dbReference type="NCBI Taxonomy" id="192952"/>
    <lineage>
        <taxon>Archaea</taxon>
        <taxon>Methanobacteriati</taxon>
        <taxon>Methanobacteriota</taxon>
        <taxon>Stenosarchaea group</taxon>
        <taxon>Methanomicrobia</taxon>
        <taxon>Methanosarcinales</taxon>
        <taxon>Methanosarcinaceae</taxon>
        <taxon>Methanosarcina</taxon>
    </lineage>
</organism>
<dbReference type="EC" id="2.5.1.147" evidence="1"/>
<dbReference type="EMBL" id="AE008384">
    <property type="protein sequence ID" value="AAM32191.1"/>
    <property type="molecule type" value="Genomic_DNA"/>
</dbReference>
<dbReference type="SMR" id="Q8PU54"/>
<dbReference type="KEGG" id="mma:MM_2495"/>
<dbReference type="PATRIC" id="fig|192952.21.peg.2856"/>
<dbReference type="eggNOG" id="arCOG00656">
    <property type="taxonomic scope" value="Archaea"/>
</dbReference>
<dbReference type="HOGENOM" id="CLU_040406_1_0_2"/>
<dbReference type="UniPathway" id="UPA00072"/>
<dbReference type="Proteomes" id="UP000000595">
    <property type="component" value="Chromosome"/>
</dbReference>
<dbReference type="GO" id="GO:0051539">
    <property type="term" value="F:4 iron, 4 sulfur cluster binding"/>
    <property type="evidence" value="ECO:0007669"/>
    <property type="project" value="UniProtKB-KW"/>
</dbReference>
<dbReference type="GO" id="GO:0141093">
    <property type="term" value="F:5-amino-6-(D-ribitylamino)uracil--L-tyrosine 4-hydroxyphenyl transferase activity"/>
    <property type="evidence" value="ECO:0007669"/>
    <property type="project" value="UniProtKB-EC"/>
</dbReference>
<dbReference type="GO" id="GO:0044689">
    <property type="term" value="F:7,8-didemethyl-8-hydroxy-5-deazariboflavin synthase activity"/>
    <property type="evidence" value="ECO:0007669"/>
    <property type="project" value="TreeGrafter"/>
</dbReference>
<dbReference type="GO" id="GO:0005506">
    <property type="term" value="F:iron ion binding"/>
    <property type="evidence" value="ECO:0007669"/>
    <property type="project" value="UniProtKB-UniRule"/>
</dbReference>
<dbReference type="CDD" id="cd01335">
    <property type="entry name" value="Radical_SAM"/>
    <property type="match status" value="1"/>
</dbReference>
<dbReference type="Gene3D" id="3.20.20.70">
    <property type="entry name" value="Aldolase class I"/>
    <property type="match status" value="1"/>
</dbReference>
<dbReference type="HAMAP" id="MF_01612">
    <property type="entry name" value="FO_synth_sub2"/>
    <property type="match status" value="1"/>
</dbReference>
<dbReference type="InterPro" id="IPR013785">
    <property type="entry name" value="Aldolase_TIM"/>
</dbReference>
<dbReference type="InterPro" id="IPR045567">
    <property type="entry name" value="CofH/MnqC-like_C"/>
</dbReference>
<dbReference type="InterPro" id="IPR019940">
    <property type="entry name" value="CofH_family"/>
</dbReference>
<dbReference type="InterPro" id="IPR006638">
    <property type="entry name" value="Elp3/MiaA/NifB-like_rSAM"/>
</dbReference>
<dbReference type="InterPro" id="IPR034405">
    <property type="entry name" value="F420"/>
</dbReference>
<dbReference type="InterPro" id="IPR020050">
    <property type="entry name" value="FO_synthase_su2"/>
</dbReference>
<dbReference type="InterPro" id="IPR007197">
    <property type="entry name" value="rSAM"/>
</dbReference>
<dbReference type="NCBIfam" id="TIGR00423">
    <property type="entry name" value="CofH family radical SAM protein"/>
    <property type="match status" value="1"/>
</dbReference>
<dbReference type="NCBIfam" id="TIGR03551">
    <property type="entry name" value="F420_cofH"/>
    <property type="match status" value="1"/>
</dbReference>
<dbReference type="NCBIfam" id="NF005609">
    <property type="entry name" value="PRK07360.1"/>
    <property type="match status" value="1"/>
</dbReference>
<dbReference type="PANTHER" id="PTHR43076">
    <property type="entry name" value="FO SYNTHASE (COFH)"/>
    <property type="match status" value="1"/>
</dbReference>
<dbReference type="PANTHER" id="PTHR43076:SF1">
    <property type="entry name" value="LIPOYL SYNTHASE 2"/>
    <property type="match status" value="1"/>
</dbReference>
<dbReference type="Pfam" id="PF19288">
    <property type="entry name" value="CofH_C"/>
    <property type="match status" value="1"/>
</dbReference>
<dbReference type="Pfam" id="PF04055">
    <property type="entry name" value="Radical_SAM"/>
    <property type="match status" value="1"/>
</dbReference>
<dbReference type="PIRSF" id="PIRSF004762">
    <property type="entry name" value="CHP00423"/>
    <property type="match status" value="1"/>
</dbReference>
<dbReference type="SFLD" id="SFLDF00293">
    <property type="entry name" value="((2_3_4_5-tetrahydroxypentyl)a"/>
    <property type="match status" value="1"/>
</dbReference>
<dbReference type="SFLD" id="SFLDF00343">
    <property type="entry name" value="aminofutalosine_synthase_(mqnE"/>
    <property type="match status" value="1"/>
</dbReference>
<dbReference type="SFLD" id="SFLDG01082">
    <property type="entry name" value="B12-binding_domain_containing"/>
    <property type="match status" value="1"/>
</dbReference>
<dbReference type="SFLD" id="SFLDF00342">
    <property type="entry name" value="cyclic_dehypoxanthine_futalosi"/>
    <property type="match status" value="1"/>
</dbReference>
<dbReference type="SFLD" id="SFLDG01389">
    <property type="entry name" value="menaquinone_synthsis_involved"/>
    <property type="match status" value="1"/>
</dbReference>
<dbReference type="SFLD" id="SFLDS00029">
    <property type="entry name" value="Radical_SAM"/>
    <property type="match status" value="1"/>
</dbReference>
<dbReference type="SMART" id="SM00729">
    <property type="entry name" value="Elp3"/>
    <property type="match status" value="1"/>
</dbReference>
<dbReference type="SUPFAM" id="SSF102114">
    <property type="entry name" value="Radical SAM enzymes"/>
    <property type="match status" value="1"/>
</dbReference>
<dbReference type="PROSITE" id="PS51918">
    <property type="entry name" value="RADICAL_SAM"/>
    <property type="match status" value="1"/>
</dbReference>
<evidence type="ECO:0000255" key="1">
    <source>
        <dbReference type="HAMAP-Rule" id="MF_01612"/>
    </source>
</evidence>
<evidence type="ECO:0000255" key="2">
    <source>
        <dbReference type="PROSITE-ProRule" id="PRU01266"/>
    </source>
</evidence>
<proteinExistence type="inferred from homology"/>
<feature type="chain" id="PRO_0000141720" description="5-amino-6-(D-ribitylamino)uracil--L-tyrosine 4-hydroxyphenyl transferase 1">
    <location>
        <begin position="1"/>
        <end position="376"/>
    </location>
</feature>
<feature type="domain" description="Radical SAM core" evidence="2">
    <location>
        <begin position="50"/>
        <end position="275"/>
    </location>
</feature>
<feature type="binding site" evidence="1">
    <location>
        <position position="64"/>
    </location>
    <ligand>
        <name>[4Fe-4S] cluster</name>
        <dbReference type="ChEBI" id="CHEBI:49883"/>
        <note>4Fe-4S-S-AdoMet</note>
    </ligand>
</feature>
<feature type="binding site" evidence="1">
    <location>
        <position position="68"/>
    </location>
    <ligand>
        <name>[4Fe-4S] cluster</name>
        <dbReference type="ChEBI" id="CHEBI:49883"/>
        <note>4Fe-4S-S-AdoMet</note>
    </ligand>
</feature>
<feature type="binding site" evidence="1">
    <location>
        <position position="71"/>
    </location>
    <ligand>
        <name>[4Fe-4S] cluster</name>
        <dbReference type="ChEBI" id="CHEBI:49883"/>
        <note>4Fe-4S-S-AdoMet</note>
    </ligand>
</feature>
<accession>Q8PU54</accession>
<sequence length="376" mass="41949">MNSRIPEDLIERAHRGKTTKEDALLLLEVPPFELFRFADELRDLAAGDTVTYVVNRNINFTSRCTGSCGFCAFRTDDGKVLSIEEIMEKVREAEKANATEVCIQGGLLPDVGLDFYQGIVEAIKAEFPEMHVHSFSPMEVYHASRISEIPVKESLRRLKRSGLDTMPGTAAEILSDRVRKIICPAKLNTAEWIEVVTQAHAAGIPTTATMMYGHVETPEERINHMLTIREIQKETGGITEFVPLPFMPYNNPVGEKMIKEGRYATPGLEDLKVYAVSRILFHGHVDNIQASWVKLGKKFAQFSLHCGVNDLGGTLMEESISRSAGACHGEMITVDELEWMIHGAGRIPKERTTLYREAHELASRNSRKIAGCGAFE</sequence>
<gene>
    <name evidence="1" type="primary">cofH1</name>
    <name type="ordered locus">MM_2495</name>
</gene>